<reference key="1">
    <citation type="journal article" date="1994" name="Curr. Genet.">
        <title>Intragenic rearrangements in the mitochondrial NADH dehydrogenase subunit 6 gene of vertebrates.</title>
        <authorList>
            <person name="Moum T."/>
            <person name="Willassen N.P."/>
            <person name="Johansen S."/>
        </authorList>
    </citation>
    <scope>NUCLEOTIDE SEQUENCE [GENOMIC DNA]</scope>
</reference>
<keyword id="KW-0249">Electron transport</keyword>
<keyword id="KW-0472">Membrane</keyword>
<keyword id="KW-0496">Mitochondrion</keyword>
<keyword id="KW-0520">NAD</keyword>
<keyword id="KW-0679">Respiratory chain</keyword>
<keyword id="KW-1278">Translocase</keyword>
<keyword id="KW-0812">Transmembrane</keyword>
<keyword id="KW-1133">Transmembrane helix</keyword>
<keyword id="KW-0813">Transport</keyword>
<keyword id="KW-0830">Ubiquinone</keyword>
<evidence type="ECO:0000250" key="1"/>
<evidence type="ECO:0000255" key="2"/>
<evidence type="ECO:0000305" key="3"/>
<comment type="function">
    <text evidence="1">Core subunit of the mitochondrial membrane respiratory chain NADH dehydrogenase (Complex I) that is believed to belong to the minimal assembly required for catalysis. Complex I functions in the transfer of electrons from NADH to the respiratory chain. The immediate electron acceptor for the enzyme is believed to be ubiquinone (By similarity).</text>
</comment>
<comment type="catalytic activity">
    <reaction>
        <text>a ubiquinone + NADH + 5 H(+)(in) = a ubiquinol + NAD(+) + 4 H(+)(out)</text>
        <dbReference type="Rhea" id="RHEA:29091"/>
        <dbReference type="Rhea" id="RHEA-COMP:9565"/>
        <dbReference type="Rhea" id="RHEA-COMP:9566"/>
        <dbReference type="ChEBI" id="CHEBI:15378"/>
        <dbReference type="ChEBI" id="CHEBI:16389"/>
        <dbReference type="ChEBI" id="CHEBI:17976"/>
        <dbReference type="ChEBI" id="CHEBI:57540"/>
        <dbReference type="ChEBI" id="CHEBI:57945"/>
        <dbReference type="EC" id="7.1.1.2"/>
    </reaction>
</comment>
<comment type="subcellular location">
    <subcellularLocation>
        <location evidence="3">Mitochondrion membrane</location>
        <topology evidence="3">Multi-pass membrane protein</topology>
    </subcellularLocation>
</comment>
<comment type="similarity">
    <text evidence="3">Belongs to the complex I subunit 6 family.</text>
</comment>
<sequence length="173" mass="18209">MTYFVFFLSLCFVLGGLAVASNPSPYYGVVGLVLASVAGCGWLLSLGVSFVSLVLFMVYLGGMLVVFVYSVALAADPFPEAWGDWRVVGYGVGFVGVLVMGLVVGGFIGCLNFGVITVDSTGMLSVRLDFSGVAMFYSRGVGMFLVAGWGLLLTLFVVLELVRGLSRGAIRAV</sequence>
<gene>
    <name type="primary">MT-ND6</name>
    <name type="synonym">MTND6</name>
    <name type="synonym">NADH6</name>
    <name type="synonym">ND6</name>
</gene>
<dbReference type="EC" id="7.1.1.2"/>
<dbReference type="EMBL" id="X73929">
    <property type="protein sequence ID" value="CAA52134.1"/>
    <property type="molecule type" value="Genomic_DNA"/>
</dbReference>
<dbReference type="PIR" id="S44410">
    <property type="entry name" value="S44410"/>
</dbReference>
<dbReference type="SMR" id="P43200"/>
<dbReference type="GO" id="GO:0031966">
    <property type="term" value="C:mitochondrial membrane"/>
    <property type="evidence" value="ECO:0007669"/>
    <property type="project" value="UniProtKB-SubCell"/>
</dbReference>
<dbReference type="GO" id="GO:0008137">
    <property type="term" value="F:NADH dehydrogenase (ubiquinone) activity"/>
    <property type="evidence" value="ECO:0007669"/>
    <property type="project" value="UniProtKB-EC"/>
</dbReference>
<dbReference type="Gene3D" id="1.20.120.1200">
    <property type="entry name" value="NADH-ubiquinone/plastoquinone oxidoreductase chain 6, subunit NuoJ"/>
    <property type="match status" value="1"/>
</dbReference>
<dbReference type="InterPro" id="IPR050269">
    <property type="entry name" value="ComplexI_Subunit6"/>
</dbReference>
<dbReference type="InterPro" id="IPR001457">
    <property type="entry name" value="NADH_UbQ/plastoQ_OxRdtase_su6"/>
</dbReference>
<dbReference type="InterPro" id="IPR042106">
    <property type="entry name" value="Nuo/plastoQ_OxRdtase_6_NuoJ"/>
</dbReference>
<dbReference type="PANTHER" id="PTHR11435">
    <property type="entry name" value="NADH UBIQUINONE OXIDOREDUCTASE SUBUNIT ND6"/>
    <property type="match status" value="1"/>
</dbReference>
<dbReference type="PANTHER" id="PTHR11435:SF1">
    <property type="entry name" value="NADH-UBIQUINONE OXIDOREDUCTASE CHAIN 6"/>
    <property type="match status" value="1"/>
</dbReference>
<dbReference type="Pfam" id="PF00499">
    <property type="entry name" value="Oxidored_q3"/>
    <property type="match status" value="1"/>
</dbReference>
<protein>
    <recommendedName>
        <fullName>NADH-ubiquinone oxidoreductase chain 6</fullName>
        <ecNumber>7.1.1.2</ecNumber>
    </recommendedName>
    <alternativeName>
        <fullName>NADH dehydrogenase subunit 6</fullName>
    </alternativeName>
</protein>
<geneLocation type="mitochondrion"/>
<name>NU6M_FRAAR</name>
<proteinExistence type="inferred from homology"/>
<feature type="chain" id="PRO_0000118283" description="NADH-ubiquinone oxidoreductase chain 6">
    <location>
        <begin position="1"/>
        <end position="173"/>
    </location>
</feature>
<feature type="transmembrane region" description="Helical" evidence="2">
    <location>
        <begin position="1"/>
        <end position="21"/>
    </location>
</feature>
<feature type="transmembrane region" description="Helical" evidence="2">
    <location>
        <begin position="27"/>
        <end position="47"/>
    </location>
</feature>
<feature type="transmembrane region" description="Helical" evidence="2">
    <location>
        <begin position="48"/>
        <end position="68"/>
    </location>
</feature>
<feature type="transmembrane region" description="Helical" evidence="2">
    <location>
        <begin position="91"/>
        <end position="111"/>
    </location>
</feature>
<feature type="transmembrane region" description="Helical" evidence="2">
    <location>
        <begin position="141"/>
        <end position="161"/>
    </location>
</feature>
<organism>
    <name type="scientific">Fratercula arctica</name>
    <name type="common">Atlantic puffin</name>
    <dbReference type="NCBI Taxonomy" id="28701"/>
    <lineage>
        <taxon>Eukaryota</taxon>
        <taxon>Metazoa</taxon>
        <taxon>Chordata</taxon>
        <taxon>Craniata</taxon>
        <taxon>Vertebrata</taxon>
        <taxon>Euteleostomi</taxon>
        <taxon>Archelosauria</taxon>
        <taxon>Archosauria</taxon>
        <taxon>Dinosauria</taxon>
        <taxon>Saurischia</taxon>
        <taxon>Theropoda</taxon>
        <taxon>Coelurosauria</taxon>
        <taxon>Aves</taxon>
        <taxon>Neognathae</taxon>
        <taxon>Neoaves</taxon>
        <taxon>Charadriiformes</taxon>
        <taxon>Alcidae</taxon>
        <taxon>Fratercula</taxon>
    </lineage>
</organism>
<accession>P43200</accession>